<gene>
    <name evidence="1" type="primary">pgi</name>
    <name type="ordered locus">MUL_4416</name>
</gene>
<feature type="chain" id="PRO_1000013991" description="Glucose-6-phosphate isomerase">
    <location>
        <begin position="1"/>
        <end position="554"/>
    </location>
</feature>
<feature type="region of interest" description="Disordered" evidence="2">
    <location>
        <begin position="527"/>
        <end position="554"/>
    </location>
</feature>
<feature type="compositionally biased region" description="Polar residues" evidence="2">
    <location>
        <begin position="527"/>
        <end position="540"/>
    </location>
</feature>
<feature type="compositionally biased region" description="Basic residues" evidence="2">
    <location>
        <begin position="544"/>
        <end position="554"/>
    </location>
</feature>
<feature type="active site" description="Proton donor" evidence="1">
    <location>
        <position position="358"/>
    </location>
</feature>
<feature type="active site" evidence="1">
    <location>
        <position position="389"/>
    </location>
</feature>
<feature type="active site" evidence="1">
    <location>
        <position position="515"/>
    </location>
</feature>
<evidence type="ECO:0000255" key="1">
    <source>
        <dbReference type="HAMAP-Rule" id="MF_00473"/>
    </source>
</evidence>
<evidence type="ECO:0000256" key="2">
    <source>
        <dbReference type="SAM" id="MobiDB-lite"/>
    </source>
</evidence>
<proteinExistence type="inferred from homology"/>
<sequence length="554" mass="60346">MTSEQPIPDITATPAWEALRKHHDQIGETHLRQIFADDPNRGHDLTVTVGDLYIDYSKHRITRDTISLLVDLARTANLEAHRDQMFAGAHINTSEDRAVLHTALRLPRDAELIVDGRNVVEDVHAVLDAMGDFTDRLRSGEWTGATGKRISTVVNIGIGGSDLGPVMVYQALRHYADAGISARFVSNVDPADLIATLADLDPATTLFIVASKTFSTLETLTNATAARRWLTDALGDAAVSQHFVAVSTNRRLVDDFGINTDNIFGFWDWVGGRYSVDSAIGLSVMAAIGREAFADFLSGFHIVDEHFRTAPPESNAPALLGLIGLWYSNFLGAQSRAVLPYSNDLARFAAYLQQLTMESNGKSTRADGTAVTTDTGEIYWGERGTNGQHAFYQLLHQGTRLVPADFIGFSQPIDDLPTVEGTGSMHDLLMSNFFAQTQVLAFGKTAEEIAAEGTPAAVVPHKVMPGNRPSTSILAKRLTPSVLGQLIAVYEHQVFTEGVVWGIDSFDQWGVELGKTQAKALLPVITSDGSPQRQSDSSTDALVRRYRTQRGRTG</sequence>
<comment type="function">
    <text evidence="1">Catalyzes the reversible isomerization of glucose-6-phosphate to fructose-6-phosphate.</text>
</comment>
<comment type="catalytic activity">
    <reaction evidence="1">
        <text>alpha-D-glucose 6-phosphate = beta-D-fructose 6-phosphate</text>
        <dbReference type="Rhea" id="RHEA:11816"/>
        <dbReference type="ChEBI" id="CHEBI:57634"/>
        <dbReference type="ChEBI" id="CHEBI:58225"/>
        <dbReference type="EC" id="5.3.1.9"/>
    </reaction>
</comment>
<comment type="pathway">
    <text evidence="1">Carbohydrate biosynthesis; gluconeogenesis.</text>
</comment>
<comment type="pathway">
    <text evidence="1">Carbohydrate degradation; glycolysis; D-glyceraldehyde 3-phosphate and glycerone phosphate from D-glucose: step 2/4.</text>
</comment>
<comment type="subcellular location">
    <subcellularLocation>
        <location evidence="1">Cytoplasm</location>
    </subcellularLocation>
</comment>
<comment type="similarity">
    <text evidence="1">Belongs to the GPI family.</text>
</comment>
<organism>
    <name type="scientific">Mycobacterium ulcerans (strain Agy99)</name>
    <dbReference type="NCBI Taxonomy" id="362242"/>
    <lineage>
        <taxon>Bacteria</taxon>
        <taxon>Bacillati</taxon>
        <taxon>Actinomycetota</taxon>
        <taxon>Actinomycetes</taxon>
        <taxon>Mycobacteriales</taxon>
        <taxon>Mycobacteriaceae</taxon>
        <taxon>Mycobacterium</taxon>
        <taxon>Mycobacterium ulcerans group</taxon>
    </lineage>
</organism>
<dbReference type="EC" id="5.3.1.9" evidence="1"/>
<dbReference type="EMBL" id="CP000325">
    <property type="protein sequence ID" value="ABL06406.1"/>
    <property type="molecule type" value="Genomic_DNA"/>
</dbReference>
<dbReference type="RefSeq" id="WP_011742007.1">
    <property type="nucleotide sequence ID" value="NC_008611.1"/>
</dbReference>
<dbReference type="SMR" id="A0PVN7"/>
<dbReference type="KEGG" id="mul:MUL_4416"/>
<dbReference type="eggNOG" id="COG0166">
    <property type="taxonomic scope" value="Bacteria"/>
</dbReference>
<dbReference type="HOGENOM" id="CLU_017947_3_1_11"/>
<dbReference type="UniPathway" id="UPA00109">
    <property type="reaction ID" value="UER00181"/>
</dbReference>
<dbReference type="UniPathway" id="UPA00138"/>
<dbReference type="Proteomes" id="UP000000765">
    <property type="component" value="Chromosome"/>
</dbReference>
<dbReference type="GO" id="GO:0005829">
    <property type="term" value="C:cytosol"/>
    <property type="evidence" value="ECO:0007669"/>
    <property type="project" value="TreeGrafter"/>
</dbReference>
<dbReference type="GO" id="GO:0097367">
    <property type="term" value="F:carbohydrate derivative binding"/>
    <property type="evidence" value="ECO:0007669"/>
    <property type="project" value="InterPro"/>
</dbReference>
<dbReference type="GO" id="GO:0004347">
    <property type="term" value="F:glucose-6-phosphate isomerase activity"/>
    <property type="evidence" value="ECO:0007669"/>
    <property type="project" value="UniProtKB-UniRule"/>
</dbReference>
<dbReference type="GO" id="GO:0048029">
    <property type="term" value="F:monosaccharide binding"/>
    <property type="evidence" value="ECO:0007669"/>
    <property type="project" value="TreeGrafter"/>
</dbReference>
<dbReference type="GO" id="GO:0006094">
    <property type="term" value="P:gluconeogenesis"/>
    <property type="evidence" value="ECO:0007669"/>
    <property type="project" value="UniProtKB-UniRule"/>
</dbReference>
<dbReference type="GO" id="GO:0051156">
    <property type="term" value="P:glucose 6-phosphate metabolic process"/>
    <property type="evidence" value="ECO:0007669"/>
    <property type="project" value="TreeGrafter"/>
</dbReference>
<dbReference type="GO" id="GO:0006096">
    <property type="term" value="P:glycolytic process"/>
    <property type="evidence" value="ECO:0007669"/>
    <property type="project" value="UniProtKB-UniRule"/>
</dbReference>
<dbReference type="CDD" id="cd05015">
    <property type="entry name" value="SIS_PGI_1"/>
    <property type="match status" value="1"/>
</dbReference>
<dbReference type="CDD" id="cd05016">
    <property type="entry name" value="SIS_PGI_2"/>
    <property type="match status" value="1"/>
</dbReference>
<dbReference type="FunFam" id="3.40.50.10490:FF:000018">
    <property type="entry name" value="Glucose-6-phosphate isomerase"/>
    <property type="match status" value="1"/>
</dbReference>
<dbReference type="Gene3D" id="1.10.1390.10">
    <property type="match status" value="1"/>
</dbReference>
<dbReference type="Gene3D" id="3.40.50.10490">
    <property type="entry name" value="Glucose-6-phosphate isomerase like protein, domain 1"/>
    <property type="match status" value="2"/>
</dbReference>
<dbReference type="HAMAP" id="MF_00473">
    <property type="entry name" value="G6P_isomerase"/>
    <property type="match status" value="1"/>
</dbReference>
<dbReference type="InterPro" id="IPR001672">
    <property type="entry name" value="G6P_Isomerase"/>
</dbReference>
<dbReference type="InterPro" id="IPR023096">
    <property type="entry name" value="G6P_Isomerase_C"/>
</dbReference>
<dbReference type="InterPro" id="IPR018189">
    <property type="entry name" value="Phosphoglucose_isomerase_CS"/>
</dbReference>
<dbReference type="InterPro" id="IPR046348">
    <property type="entry name" value="SIS_dom_sf"/>
</dbReference>
<dbReference type="InterPro" id="IPR035476">
    <property type="entry name" value="SIS_PGI_1"/>
</dbReference>
<dbReference type="InterPro" id="IPR035482">
    <property type="entry name" value="SIS_PGI_2"/>
</dbReference>
<dbReference type="NCBIfam" id="NF001211">
    <property type="entry name" value="PRK00179.1"/>
    <property type="match status" value="1"/>
</dbReference>
<dbReference type="PANTHER" id="PTHR11469">
    <property type="entry name" value="GLUCOSE-6-PHOSPHATE ISOMERASE"/>
    <property type="match status" value="1"/>
</dbReference>
<dbReference type="PANTHER" id="PTHR11469:SF1">
    <property type="entry name" value="GLUCOSE-6-PHOSPHATE ISOMERASE"/>
    <property type="match status" value="1"/>
</dbReference>
<dbReference type="Pfam" id="PF00342">
    <property type="entry name" value="PGI"/>
    <property type="match status" value="1"/>
</dbReference>
<dbReference type="PRINTS" id="PR00662">
    <property type="entry name" value="G6PISOMERASE"/>
</dbReference>
<dbReference type="SUPFAM" id="SSF53697">
    <property type="entry name" value="SIS domain"/>
    <property type="match status" value="1"/>
</dbReference>
<dbReference type="PROSITE" id="PS00765">
    <property type="entry name" value="P_GLUCOSE_ISOMERASE_1"/>
    <property type="match status" value="1"/>
</dbReference>
<dbReference type="PROSITE" id="PS00174">
    <property type="entry name" value="P_GLUCOSE_ISOMERASE_2"/>
    <property type="match status" value="1"/>
</dbReference>
<dbReference type="PROSITE" id="PS51463">
    <property type="entry name" value="P_GLUCOSE_ISOMERASE_3"/>
    <property type="match status" value="1"/>
</dbReference>
<reference key="1">
    <citation type="journal article" date="2007" name="Genome Res.">
        <title>Reductive evolution and niche adaptation inferred from the genome of Mycobacterium ulcerans, the causative agent of Buruli ulcer.</title>
        <authorList>
            <person name="Stinear T.P."/>
            <person name="Seemann T."/>
            <person name="Pidot S."/>
            <person name="Frigui W."/>
            <person name="Reysset G."/>
            <person name="Garnier T."/>
            <person name="Meurice G."/>
            <person name="Simon D."/>
            <person name="Bouchier C."/>
            <person name="Ma L."/>
            <person name="Tichit M."/>
            <person name="Porter J.L."/>
            <person name="Ryan J."/>
            <person name="Johnson P.D.R."/>
            <person name="Davies J.K."/>
            <person name="Jenkin G.A."/>
            <person name="Small P.L.C."/>
            <person name="Jones L.M."/>
            <person name="Tekaia F."/>
            <person name="Laval F."/>
            <person name="Daffe M."/>
            <person name="Parkhill J."/>
            <person name="Cole S.T."/>
        </authorList>
    </citation>
    <scope>NUCLEOTIDE SEQUENCE [LARGE SCALE GENOMIC DNA]</scope>
    <source>
        <strain>Agy99</strain>
    </source>
</reference>
<keyword id="KW-0963">Cytoplasm</keyword>
<keyword id="KW-0312">Gluconeogenesis</keyword>
<keyword id="KW-0324">Glycolysis</keyword>
<keyword id="KW-0413">Isomerase</keyword>
<name>G6PI_MYCUA</name>
<accession>A0PVN7</accession>
<protein>
    <recommendedName>
        <fullName evidence="1">Glucose-6-phosphate isomerase</fullName>
        <shortName evidence="1">GPI</shortName>
        <ecNumber evidence="1">5.3.1.9</ecNumber>
    </recommendedName>
    <alternativeName>
        <fullName evidence="1">Phosphoglucose isomerase</fullName>
        <shortName evidence="1">PGI</shortName>
    </alternativeName>
    <alternativeName>
        <fullName evidence="1">Phosphohexose isomerase</fullName>
        <shortName evidence="1">PHI</shortName>
    </alternativeName>
</protein>